<proteinExistence type="inferred from homology"/>
<sequence length="65" mass="7526">MAKKVKGARVTIHLECIDCNNQQDSGRKLASFSRYTTQKNRYNTPTRLELKKFCPSCSKHTIHIE</sequence>
<organism>
    <name type="scientific">Psilotum nudum</name>
    <name type="common">Whisk fern</name>
    <name type="synonym">Lycopodium nudum</name>
    <dbReference type="NCBI Taxonomy" id="3240"/>
    <lineage>
        <taxon>Eukaryota</taxon>
        <taxon>Viridiplantae</taxon>
        <taxon>Streptophyta</taxon>
        <taxon>Embryophyta</taxon>
        <taxon>Tracheophyta</taxon>
        <taxon>Polypodiopsida</taxon>
        <taxon>Ophioglossidae</taxon>
        <taxon>Psilotales</taxon>
        <taxon>Psilotaceae</taxon>
        <taxon>Psilotum</taxon>
    </lineage>
</organism>
<keyword id="KW-0150">Chloroplast</keyword>
<keyword id="KW-0934">Plastid</keyword>
<keyword id="KW-0687">Ribonucleoprotein</keyword>
<keyword id="KW-0689">Ribosomal protein</keyword>
<name>RK33_PSINU</name>
<protein>
    <recommendedName>
        <fullName evidence="1">Large ribosomal subunit protein bL33c</fullName>
    </recommendedName>
    <alternativeName>
        <fullName evidence="2">50S ribosomal protein L33, chloroplastic</fullName>
    </alternativeName>
</protein>
<geneLocation type="chloroplast"/>
<gene>
    <name evidence="1" type="primary">rpl33</name>
</gene>
<evidence type="ECO:0000255" key="1">
    <source>
        <dbReference type="HAMAP-Rule" id="MF_00294"/>
    </source>
</evidence>
<evidence type="ECO:0000305" key="2"/>
<feature type="chain" id="PRO_0000170300" description="Large ribosomal subunit protein bL33c">
    <location>
        <begin position="1"/>
        <end position="65"/>
    </location>
</feature>
<accession>Q8WI00</accession>
<reference key="1">
    <citation type="journal article" date="2004" name="Mol. Biol. Evol.">
        <title>Chloroplast phylogeny indicates that bryophytes are monophyletic.</title>
        <authorList>
            <person name="Nishiyama T."/>
            <person name="Wolf P.G."/>
            <person name="Kugita M."/>
            <person name="Sinclair R.B."/>
            <person name="Sugita M."/>
            <person name="Sugiura C."/>
            <person name="Wakasugi T."/>
            <person name="Yamada K."/>
            <person name="Yoshinaga K."/>
            <person name="Yamaguchi K."/>
            <person name="Ueda K."/>
            <person name="Hasebe M."/>
        </authorList>
    </citation>
    <scope>NUCLEOTIDE SEQUENCE [LARGE SCALE GENOMIC DNA]</scope>
    <source>
        <strain>Kingyoku</strain>
    </source>
</reference>
<dbReference type="EMBL" id="AP004638">
    <property type="protein sequence ID" value="BAB84237.1"/>
    <property type="molecule type" value="Genomic_DNA"/>
</dbReference>
<dbReference type="RefSeq" id="NP_569650.1">
    <property type="nucleotide sequence ID" value="NC_003386.1"/>
</dbReference>
<dbReference type="GeneID" id="2545164"/>
<dbReference type="GO" id="GO:0009507">
    <property type="term" value="C:chloroplast"/>
    <property type="evidence" value="ECO:0007669"/>
    <property type="project" value="UniProtKB-SubCell"/>
</dbReference>
<dbReference type="GO" id="GO:1990904">
    <property type="term" value="C:ribonucleoprotein complex"/>
    <property type="evidence" value="ECO:0007669"/>
    <property type="project" value="UniProtKB-KW"/>
</dbReference>
<dbReference type="GO" id="GO:0005840">
    <property type="term" value="C:ribosome"/>
    <property type="evidence" value="ECO:0007669"/>
    <property type="project" value="UniProtKB-KW"/>
</dbReference>
<dbReference type="GO" id="GO:0003735">
    <property type="term" value="F:structural constituent of ribosome"/>
    <property type="evidence" value="ECO:0007669"/>
    <property type="project" value="InterPro"/>
</dbReference>
<dbReference type="GO" id="GO:0006412">
    <property type="term" value="P:translation"/>
    <property type="evidence" value="ECO:0007669"/>
    <property type="project" value="UniProtKB-UniRule"/>
</dbReference>
<dbReference type="Gene3D" id="2.20.28.120">
    <property type="entry name" value="Ribosomal protein L33"/>
    <property type="match status" value="1"/>
</dbReference>
<dbReference type="HAMAP" id="MF_00294">
    <property type="entry name" value="Ribosomal_bL33"/>
    <property type="match status" value="1"/>
</dbReference>
<dbReference type="InterPro" id="IPR001705">
    <property type="entry name" value="Ribosomal_bL33"/>
</dbReference>
<dbReference type="InterPro" id="IPR018264">
    <property type="entry name" value="Ribosomal_bL33_CS"/>
</dbReference>
<dbReference type="InterPro" id="IPR038584">
    <property type="entry name" value="Ribosomal_bL33_sf"/>
</dbReference>
<dbReference type="InterPro" id="IPR011332">
    <property type="entry name" value="Ribosomal_zn-bd"/>
</dbReference>
<dbReference type="NCBIfam" id="NF001764">
    <property type="entry name" value="PRK00504.1"/>
    <property type="match status" value="1"/>
</dbReference>
<dbReference type="NCBIfam" id="NF001860">
    <property type="entry name" value="PRK00595.1"/>
    <property type="match status" value="1"/>
</dbReference>
<dbReference type="NCBIfam" id="TIGR01023">
    <property type="entry name" value="rpmG_bact"/>
    <property type="match status" value="1"/>
</dbReference>
<dbReference type="PANTHER" id="PTHR43168">
    <property type="entry name" value="50S RIBOSOMAL PROTEIN L33, CHLOROPLASTIC"/>
    <property type="match status" value="1"/>
</dbReference>
<dbReference type="PANTHER" id="PTHR43168:SF2">
    <property type="entry name" value="LARGE RIBOSOMAL SUBUNIT PROTEIN BL33C"/>
    <property type="match status" value="1"/>
</dbReference>
<dbReference type="Pfam" id="PF00471">
    <property type="entry name" value="Ribosomal_L33"/>
    <property type="match status" value="1"/>
</dbReference>
<dbReference type="SUPFAM" id="SSF57829">
    <property type="entry name" value="Zn-binding ribosomal proteins"/>
    <property type="match status" value="1"/>
</dbReference>
<dbReference type="PROSITE" id="PS00582">
    <property type="entry name" value="RIBOSOMAL_L33"/>
    <property type="match status" value="1"/>
</dbReference>
<comment type="subcellular location">
    <subcellularLocation>
        <location>Plastid</location>
        <location>Chloroplast</location>
    </subcellularLocation>
</comment>
<comment type="similarity">
    <text evidence="1">Belongs to the bacterial ribosomal protein bL33 family.</text>
</comment>